<sequence length="298" mass="32699">MDKNIIIGAMTALITPFKNGKVDEQSYARLIKRQIENGIDAVVPVGTTGESATLTHEEHRTCIEIAVETCKGTKVKVLAGAGSNATHEAVGLAKFAKEHGADGILSVVPYYNKPTQQGLYEHYKAIAQSVDIPVLLYNVPGRTGCEISTDTIIKLFRDCENIYGVKEASGNIDKCVDLLAHEPRMMLISGEDAINYPILSNGGKGVISVTSNLLPDMISALTHFALDENYKEAKKINDELYNINKILFCESNPIPIKTAMYLAGLIESLEFRLPLCSPSKENFAKIEEVMKKYKIKGF</sequence>
<reference key="1">
    <citation type="journal article" date="2005" name="PLoS Biol.">
        <title>Major structural differences and novel potential virulence mechanisms from the genomes of multiple Campylobacter species.</title>
        <authorList>
            <person name="Fouts D.E."/>
            <person name="Mongodin E.F."/>
            <person name="Mandrell R.E."/>
            <person name="Miller W.G."/>
            <person name="Rasko D.A."/>
            <person name="Ravel J."/>
            <person name="Brinkac L.M."/>
            <person name="DeBoy R.T."/>
            <person name="Parker C.T."/>
            <person name="Daugherty S.C."/>
            <person name="Dodson R.J."/>
            <person name="Durkin A.S."/>
            <person name="Madupu R."/>
            <person name="Sullivan S.A."/>
            <person name="Shetty J.U."/>
            <person name="Ayodeji M.A."/>
            <person name="Shvartsbeyn A."/>
            <person name="Schatz M.C."/>
            <person name="Badger J.H."/>
            <person name="Fraser C.M."/>
            <person name="Nelson K.E."/>
        </authorList>
    </citation>
    <scope>NUCLEOTIDE SEQUENCE [LARGE SCALE GENOMIC DNA]</scope>
    <source>
        <strain>RM1221</strain>
    </source>
</reference>
<evidence type="ECO:0000255" key="1">
    <source>
        <dbReference type="HAMAP-Rule" id="MF_00418"/>
    </source>
</evidence>
<evidence type="ECO:0000305" key="2"/>
<dbReference type="EC" id="4.3.3.7" evidence="1"/>
<dbReference type="EMBL" id="CP000025">
    <property type="protein sequence ID" value="AAW35234.1"/>
    <property type="molecule type" value="Genomic_DNA"/>
</dbReference>
<dbReference type="RefSeq" id="WP_002867956.1">
    <property type="nucleotide sequence ID" value="NC_003912.7"/>
</dbReference>
<dbReference type="SMR" id="Q5HUY6"/>
<dbReference type="KEGG" id="cjr:CJE0897"/>
<dbReference type="HOGENOM" id="CLU_049343_7_0_7"/>
<dbReference type="UniPathway" id="UPA00034">
    <property type="reaction ID" value="UER00017"/>
</dbReference>
<dbReference type="GO" id="GO:0005829">
    <property type="term" value="C:cytosol"/>
    <property type="evidence" value="ECO:0007669"/>
    <property type="project" value="TreeGrafter"/>
</dbReference>
<dbReference type="GO" id="GO:0008840">
    <property type="term" value="F:4-hydroxy-tetrahydrodipicolinate synthase activity"/>
    <property type="evidence" value="ECO:0007669"/>
    <property type="project" value="UniProtKB-UniRule"/>
</dbReference>
<dbReference type="GO" id="GO:0019877">
    <property type="term" value="P:diaminopimelate biosynthetic process"/>
    <property type="evidence" value="ECO:0007669"/>
    <property type="project" value="UniProtKB-UniRule"/>
</dbReference>
<dbReference type="GO" id="GO:0009089">
    <property type="term" value="P:lysine biosynthetic process via diaminopimelate"/>
    <property type="evidence" value="ECO:0007669"/>
    <property type="project" value="UniProtKB-UniRule"/>
</dbReference>
<dbReference type="CDD" id="cd00950">
    <property type="entry name" value="DHDPS"/>
    <property type="match status" value="1"/>
</dbReference>
<dbReference type="Gene3D" id="3.20.20.70">
    <property type="entry name" value="Aldolase class I"/>
    <property type="match status" value="1"/>
</dbReference>
<dbReference type="HAMAP" id="MF_00418">
    <property type="entry name" value="DapA"/>
    <property type="match status" value="1"/>
</dbReference>
<dbReference type="InterPro" id="IPR013785">
    <property type="entry name" value="Aldolase_TIM"/>
</dbReference>
<dbReference type="InterPro" id="IPR005263">
    <property type="entry name" value="DapA"/>
</dbReference>
<dbReference type="InterPro" id="IPR002220">
    <property type="entry name" value="DapA-like"/>
</dbReference>
<dbReference type="InterPro" id="IPR020625">
    <property type="entry name" value="Schiff_base-form_aldolases_AS"/>
</dbReference>
<dbReference type="InterPro" id="IPR020624">
    <property type="entry name" value="Schiff_base-form_aldolases_CS"/>
</dbReference>
<dbReference type="NCBIfam" id="TIGR00674">
    <property type="entry name" value="dapA"/>
    <property type="match status" value="1"/>
</dbReference>
<dbReference type="PANTHER" id="PTHR12128:SF66">
    <property type="entry name" value="4-HYDROXY-2-OXOGLUTARATE ALDOLASE, MITOCHONDRIAL"/>
    <property type="match status" value="1"/>
</dbReference>
<dbReference type="PANTHER" id="PTHR12128">
    <property type="entry name" value="DIHYDRODIPICOLINATE SYNTHASE"/>
    <property type="match status" value="1"/>
</dbReference>
<dbReference type="Pfam" id="PF00701">
    <property type="entry name" value="DHDPS"/>
    <property type="match status" value="1"/>
</dbReference>
<dbReference type="PIRSF" id="PIRSF001365">
    <property type="entry name" value="DHDPS"/>
    <property type="match status" value="1"/>
</dbReference>
<dbReference type="PRINTS" id="PR00146">
    <property type="entry name" value="DHPICSNTHASE"/>
</dbReference>
<dbReference type="SMART" id="SM01130">
    <property type="entry name" value="DHDPS"/>
    <property type="match status" value="1"/>
</dbReference>
<dbReference type="SUPFAM" id="SSF51569">
    <property type="entry name" value="Aldolase"/>
    <property type="match status" value="1"/>
</dbReference>
<dbReference type="PROSITE" id="PS00665">
    <property type="entry name" value="DHDPS_1"/>
    <property type="match status" value="1"/>
</dbReference>
<dbReference type="PROSITE" id="PS00666">
    <property type="entry name" value="DHDPS_2"/>
    <property type="match status" value="1"/>
</dbReference>
<comment type="function">
    <text evidence="1">Catalyzes the condensation of (S)-aspartate-beta-semialdehyde [(S)-ASA] and pyruvate to 4-hydroxy-tetrahydrodipicolinate (HTPA).</text>
</comment>
<comment type="catalytic activity">
    <reaction evidence="1">
        <text>L-aspartate 4-semialdehyde + pyruvate = (2S,4S)-4-hydroxy-2,3,4,5-tetrahydrodipicolinate + H2O + H(+)</text>
        <dbReference type="Rhea" id="RHEA:34171"/>
        <dbReference type="ChEBI" id="CHEBI:15361"/>
        <dbReference type="ChEBI" id="CHEBI:15377"/>
        <dbReference type="ChEBI" id="CHEBI:15378"/>
        <dbReference type="ChEBI" id="CHEBI:67139"/>
        <dbReference type="ChEBI" id="CHEBI:537519"/>
        <dbReference type="EC" id="4.3.3.7"/>
    </reaction>
</comment>
<comment type="pathway">
    <text evidence="1">Amino-acid biosynthesis; L-lysine biosynthesis via DAP pathway; (S)-tetrahydrodipicolinate from L-aspartate: step 3/4.</text>
</comment>
<comment type="subunit">
    <text evidence="1">Homotetramer; dimer of dimers.</text>
</comment>
<comment type="subcellular location">
    <subcellularLocation>
        <location evidence="1">Cytoplasm</location>
    </subcellularLocation>
</comment>
<comment type="similarity">
    <text evidence="1">Belongs to the DapA family.</text>
</comment>
<comment type="caution">
    <text evidence="2">Was originally thought to be a dihydrodipicolinate synthase (DHDPS), catalyzing the condensation of (S)-aspartate-beta-semialdehyde [(S)-ASA] and pyruvate to dihydrodipicolinate (DHDP). However, it was shown in E.coli that the product of the enzymatic reaction is not dihydrodipicolinate but in fact (4S)-4-hydroxy-2,3,4,5-tetrahydro-(2S)-dipicolinic acid (HTPA), and that the consecutive dehydration reaction leading to DHDP is not spontaneous but catalyzed by DapB.</text>
</comment>
<name>DAPA_CAMJR</name>
<organism>
    <name type="scientific">Campylobacter jejuni (strain RM1221)</name>
    <dbReference type="NCBI Taxonomy" id="195099"/>
    <lineage>
        <taxon>Bacteria</taxon>
        <taxon>Pseudomonadati</taxon>
        <taxon>Campylobacterota</taxon>
        <taxon>Epsilonproteobacteria</taxon>
        <taxon>Campylobacterales</taxon>
        <taxon>Campylobacteraceae</taxon>
        <taxon>Campylobacter</taxon>
    </lineage>
</organism>
<gene>
    <name evidence="1" type="primary">dapA</name>
    <name type="ordered locus">CJE0897</name>
</gene>
<accession>Q5HUY6</accession>
<feature type="chain" id="PRO_0000103094" description="4-hydroxy-tetrahydrodipicolinate synthase">
    <location>
        <begin position="1"/>
        <end position="298"/>
    </location>
</feature>
<feature type="active site" description="Proton donor/acceptor" evidence="1">
    <location>
        <position position="137"/>
    </location>
</feature>
<feature type="active site" description="Schiff-base intermediate with substrate" evidence="1">
    <location>
        <position position="166"/>
    </location>
</feature>
<feature type="binding site" evidence="1">
    <location>
        <position position="48"/>
    </location>
    <ligand>
        <name>pyruvate</name>
        <dbReference type="ChEBI" id="CHEBI:15361"/>
    </ligand>
</feature>
<feature type="binding site" evidence="1">
    <location>
        <position position="207"/>
    </location>
    <ligand>
        <name>pyruvate</name>
        <dbReference type="ChEBI" id="CHEBI:15361"/>
    </ligand>
</feature>
<feature type="site" description="Part of a proton relay during catalysis" evidence="1">
    <location>
        <position position="47"/>
    </location>
</feature>
<feature type="site" description="Part of a proton relay during catalysis" evidence="1">
    <location>
        <position position="111"/>
    </location>
</feature>
<keyword id="KW-0028">Amino-acid biosynthesis</keyword>
<keyword id="KW-0963">Cytoplasm</keyword>
<keyword id="KW-0220">Diaminopimelate biosynthesis</keyword>
<keyword id="KW-0456">Lyase</keyword>
<keyword id="KW-0457">Lysine biosynthesis</keyword>
<keyword id="KW-0704">Schiff base</keyword>
<proteinExistence type="inferred from homology"/>
<protein>
    <recommendedName>
        <fullName evidence="1">4-hydroxy-tetrahydrodipicolinate synthase</fullName>
        <shortName evidence="1">HTPA synthase</shortName>
        <ecNumber evidence="1">4.3.3.7</ecNumber>
    </recommendedName>
</protein>